<protein>
    <recommendedName>
        <fullName>Protein RecA</fullName>
    </recommendedName>
    <alternativeName>
        <fullName>Recombinase A</fullName>
    </alternativeName>
</protein>
<name>RECA_STRSL</name>
<keyword id="KW-0067">ATP-binding</keyword>
<keyword id="KW-0963">Cytoplasm</keyword>
<keyword id="KW-0227">DNA damage</keyword>
<keyword id="KW-0233">DNA recombination</keyword>
<keyword id="KW-0234">DNA repair</keyword>
<keyword id="KW-0238">DNA-binding</keyword>
<keyword id="KW-0547">Nucleotide-binding</keyword>
<keyword id="KW-0742">SOS response</keyword>
<accession>P49987</accession>
<organism>
    <name type="scientific">Streptococcus salivarius</name>
    <dbReference type="NCBI Taxonomy" id="1304"/>
    <lineage>
        <taxon>Bacteria</taxon>
        <taxon>Bacillati</taxon>
        <taxon>Bacillota</taxon>
        <taxon>Bacilli</taxon>
        <taxon>Lactobacillales</taxon>
        <taxon>Streptococcaceae</taxon>
        <taxon>Streptococcus</taxon>
    </lineage>
</organism>
<proteinExistence type="inferred from homology"/>
<dbReference type="EMBL" id="M94062">
    <property type="protein sequence ID" value="AAA26965.1"/>
    <property type="molecule type" value="Genomic_DNA"/>
</dbReference>
<dbReference type="PIR" id="G42721">
    <property type="entry name" value="G42721"/>
</dbReference>
<dbReference type="SMR" id="P49987"/>
<dbReference type="STRING" id="1304.HMPREF3219_0201162"/>
<dbReference type="GO" id="GO:0005829">
    <property type="term" value="C:cytosol"/>
    <property type="evidence" value="ECO:0007669"/>
    <property type="project" value="TreeGrafter"/>
</dbReference>
<dbReference type="GO" id="GO:0005524">
    <property type="term" value="F:ATP binding"/>
    <property type="evidence" value="ECO:0007669"/>
    <property type="project" value="UniProtKB-KW"/>
</dbReference>
<dbReference type="GO" id="GO:0140664">
    <property type="term" value="F:ATP-dependent DNA damage sensor activity"/>
    <property type="evidence" value="ECO:0007669"/>
    <property type="project" value="InterPro"/>
</dbReference>
<dbReference type="GO" id="GO:0003697">
    <property type="term" value="F:single-stranded DNA binding"/>
    <property type="evidence" value="ECO:0007669"/>
    <property type="project" value="InterPro"/>
</dbReference>
<dbReference type="GO" id="GO:0006310">
    <property type="term" value="P:DNA recombination"/>
    <property type="evidence" value="ECO:0007669"/>
    <property type="project" value="UniProtKB-KW"/>
</dbReference>
<dbReference type="GO" id="GO:0006281">
    <property type="term" value="P:DNA repair"/>
    <property type="evidence" value="ECO:0007669"/>
    <property type="project" value="UniProtKB-KW"/>
</dbReference>
<dbReference type="GO" id="GO:0009432">
    <property type="term" value="P:SOS response"/>
    <property type="evidence" value="ECO:0007669"/>
    <property type="project" value="UniProtKB-KW"/>
</dbReference>
<dbReference type="Gene3D" id="3.40.50.300">
    <property type="entry name" value="P-loop containing nucleotide triphosphate hydrolases"/>
    <property type="match status" value="1"/>
</dbReference>
<dbReference type="InterPro" id="IPR013765">
    <property type="entry name" value="DNA_recomb/repair_RecA"/>
</dbReference>
<dbReference type="InterPro" id="IPR027417">
    <property type="entry name" value="P-loop_NTPase"/>
</dbReference>
<dbReference type="InterPro" id="IPR049428">
    <property type="entry name" value="RecA-like_N"/>
</dbReference>
<dbReference type="InterPro" id="IPR020588">
    <property type="entry name" value="RecA_ATP-bd"/>
</dbReference>
<dbReference type="PANTHER" id="PTHR45900:SF1">
    <property type="entry name" value="MITOCHONDRIAL DNA REPAIR PROTEIN RECA HOMOLOG-RELATED"/>
    <property type="match status" value="1"/>
</dbReference>
<dbReference type="PANTHER" id="PTHR45900">
    <property type="entry name" value="RECA"/>
    <property type="match status" value="1"/>
</dbReference>
<dbReference type="Pfam" id="PF00154">
    <property type="entry name" value="RecA"/>
    <property type="match status" value="1"/>
</dbReference>
<dbReference type="PRINTS" id="PR00142">
    <property type="entry name" value="RECA"/>
</dbReference>
<dbReference type="SUPFAM" id="SSF52540">
    <property type="entry name" value="P-loop containing nucleoside triphosphate hydrolases"/>
    <property type="match status" value="1"/>
</dbReference>
<dbReference type="PROSITE" id="PS50162">
    <property type="entry name" value="RECA_2"/>
    <property type="match status" value="1"/>
</dbReference>
<comment type="function">
    <text evidence="1">Can catalyze the hydrolysis of ATP in the presence of single-stranded DNA, the ATP-dependent uptake of single-stranded DNA by duplex DNA, and the ATP-dependent hybridization of homologous single-stranded DNAs. It interacts with LexA causing its activation and leading to its autocatalytic cleavage (By similarity).</text>
</comment>
<comment type="subcellular location">
    <subcellularLocation>
        <location evidence="1">Cytoplasm</location>
    </subcellularLocation>
</comment>
<comment type="similarity">
    <text evidence="2">Belongs to the RecA family.</text>
</comment>
<feature type="chain" id="PRO_0000122867" description="Protein RecA">
    <location>
        <begin position="1" status="less than"/>
        <end position="104" status="greater than"/>
    </location>
</feature>
<feature type="non-terminal residue">
    <location>
        <position position="1"/>
    </location>
</feature>
<feature type="non-terminal residue">
    <location>
        <position position="104"/>
    </location>
</feature>
<evidence type="ECO:0000250" key="1"/>
<evidence type="ECO:0000305" key="2"/>
<sequence length="104" mass="11016">AYARALGVNIDELLLSQPDSGEQGLEIAGKLIDSGAVDLVVVDSVAAFVPRAEIDGDSGDSHVGLQARMMSQAMRKLSASINKTKTIAIFINQLREKVGIMFGN</sequence>
<reference key="1">
    <citation type="journal article" date="1992" name="J. Bacteriol.">
        <title>A general method for cloning recA genes of Gram-positive bacteria by polymerase chain reaction.</title>
        <authorList>
            <person name="Duwat P."/>
            <person name="Ehrlich S.D."/>
            <person name="Gruss A."/>
        </authorList>
    </citation>
    <scope>NUCLEOTIDE SEQUENCE [GENOMIC DNA]</scope>
</reference>
<gene>
    <name type="primary">recA</name>
</gene>